<comment type="induction">
    <text>By pathogen infection.</text>
</comment>
<comment type="similarity">
    <text evidence="2">Belongs to the thaumatin family.</text>
</comment>
<reference key="1">
    <citation type="journal article" date="1991" name="Plant Mol. Biol.">
        <title>Sequence of a wheat cDNA encoding a pathogen-induced thaumatin-like protein.</title>
        <authorList>
            <person name="Rebmann G."/>
            <person name="Mauch F."/>
            <person name="Dudler R."/>
        </authorList>
    </citation>
    <scope>NUCLEOTIDE SEQUENCE [MRNA]</scope>
    <source>
        <strain>cv. Cheyenne</strain>
        <tissue>Leaf</tissue>
    </source>
</reference>
<sequence>MATSPVLFLLLAVFAAGASAATFNIKNNCGFTIWPAGIPVGGGFALGSGQTSSINVPAGTQAGRIWARTGCSFNGGSGSCQTGDCGGQLSCSLSGRPPATLAEYTIGGGSTQDFYDISVIDGFNLAMDFSCSTGDALQCRDPSCPPPQAYQHPNDVATHACSGNNNYQITFCP</sequence>
<evidence type="ECO:0000255" key="1"/>
<evidence type="ECO:0000255" key="2">
    <source>
        <dbReference type="PROSITE-ProRule" id="PRU00699"/>
    </source>
</evidence>
<feature type="signal peptide" evidence="1">
    <location>
        <begin position="1"/>
        <end position="20"/>
    </location>
</feature>
<feature type="chain" id="PRO_0000034025" description="Thaumatin-like protein PWIR2">
    <location>
        <begin position="21"/>
        <end position="173"/>
    </location>
</feature>
<keyword id="KW-0568">Pathogenesis-related protein</keyword>
<keyword id="KW-0611">Plant defense</keyword>
<keyword id="KW-1185">Reference proteome</keyword>
<keyword id="KW-0732">Signal</keyword>
<proteinExistence type="evidence at transcript level"/>
<protein>
    <recommendedName>
        <fullName>Thaumatin-like protein PWIR2</fullName>
    </recommendedName>
</protein>
<dbReference type="EMBL" id="X58394">
    <property type="protein sequence ID" value="CAA41283.1"/>
    <property type="molecule type" value="mRNA"/>
</dbReference>
<dbReference type="PIR" id="S16524">
    <property type="entry name" value="S16524"/>
</dbReference>
<dbReference type="RefSeq" id="NP_001414906.1">
    <property type="nucleotide sequence ID" value="NM_001427977.1"/>
</dbReference>
<dbReference type="SMR" id="P27357"/>
<dbReference type="STRING" id="4565.P27357"/>
<dbReference type="Allergome" id="8726">
    <property type="allergen name" value="Tri a TLP"/>
</dbReference>
<dbReference type="PaxDb" id="4565-Traes_7DL_0FD6D8ED61.2"/>
<dbReference type="EnsemblPlants" id="TraesARI7D03G04571400.1">
    <property type="protein sequence ID" value="TraesARI7D03G04571400.1.CDS1"/>
    <property type="gene ID" value="TraesARI7D03G04571400"/>
</dbReference>
<dbReference type="EnsemblPlants" id="TraesCAD_scaffold_030350_01G000300.1">
    <property type="protein sequence ID" value="TraesCAD_scaffold_030350_01G000300.1"/>
    <property type="gene ID" value="TraesCAD_scaffold_030350_01G000300"/>
</dbReference>
<dbReference type="EnsemblPlants" id="TraesCLE_scaffold_011549_01G000100.1">
    <property type="protein sequence ID" value="TraesCLE_scaffold_011549_01G000100.1"/>
    <property type="gene ID" value="TraesCLE_scaffold_011549_01G000100"/>
</dbReference>
<dbReference type="EnsemblPlants" id="TraesCS7D02G551400.1">
    <property type="protein sequence ID" value="TraesCS7D02G551400.1.cds1"/>
    <property type="gene ID" value="TraesCS7D02G551400"/>
</dbReference>
<dbReference type="EnsemblPlants" id="TraesCS7D03G1290300.1">
    <property type="protein sequence ID" value="TraesCS7D03G1290300.1.CDS1"/>
    <property type="gene ID" value="TraesCS7D03G1290300"/>
</dbReference>
<dbReference type="EnsemblPlants" id="TraesJAG7D03G04478230.1">
    <property type="protein sequence ID" value="TraesJAG7D03G04478230.1.CDS1"/>
    <property type="gene ID" value="TraesJAG7D03G04478230"/>
</dbReference>
<dbReference type="EnsemblPlants" id="TraesJUL7D03G04541580.1">
    <property type="protein sequence ID" value="TraesJUL7D03G04541580.1.CDS1"/>
    <property type="gene ID" value="TraesJUL7D03G04541580"/>
</dbReference>
<dbReference type="EnsemblPlants" id="TraesKAR7D01G0461220.1">
    <property type="protein sequence ID" value="cds.TraesKAR7D01G0461220.1"/>
    <property type="gene ID" value="TraesKAR7D01G0461220"/>
</dbReference>
<dbReference type="EnsemblPlants" id="TraesLAC7D03G04441680.1">
    <property type="protein sequence ID" value="TraesLAC7D03G04441680.1.CDS1"/>
    <property type="gene ID" value="TraesLAC7D03G04441680"/>
</dbReference>
<dbReference type="EnsemblPlants" id="TraesLDM7D03G04502620.1">
    <property type="protein sequence ID" value="TraesLDM7D03G04502620.1.CDS1"/>
    <property type="gene ID" value="TraesLDM7D03G04502620"/>
</dbReference>
<dbReference type="EnsemblPlants" id="TraesMAC7D03G04488580.1">
    <property type="protein sequence ID" value="TraesMAC7D03G04488580.1.CDS1"/>
    <property type="gene ID" value="TraesMAC7D03G04488580"/>
</dbReference>
<dbReference type="EnsemblPlants" id="TraesNOR7D03G04542730.1">
    <property type="protein sequence ID" value="TraesNOR7D03G04542730.1.CDS1"/>
    <property type="gene ID" value="TraesNOR7D03G04542730"/>
</dbReference>
<dbReference type="EnsemblPlants" id="TraesNOR7D03G04542730.2">
    <property type="protein sequence ID" value="TraesNOR7D03G04542730.2.CDS1"/>
    <property type="gene ID" value="TraesNOR7D03G04542730"/>
</dbReference>
<dbReference type="EnsemblPlants" id="TraesPARA_EIv1.0_2641160.1">
    <property type="protein sequence ID" value="TraesPARA_EIv1.0_2641160.1.CDS1"/>
    <property type="gene ID" value="TraesPARA_EIv1.0_2641160"/>
</dbReference>
<dbReference type="EnsemblPlants" id="TraesROB_scaffold_001937_01G001300.1">
    <property type="protein sequence ID" value="TraesROB_scaffold_001937_01G001300.1"/>
    <property type="gene ID" value="TraesROB_scaffold_001937_01G001300"/>
</dbReference>
<dbReference type="EnsemblPlants" id="TraesSTA7D03G04488310.1">
    <property type="protein sequence ID" value="TraesSTA7D03G04488310.1.CDS1"/>
    <property type="gene ID" value="TraesSTA7D03G04488310"/>
</dbReference>
<dbReference type="EnsemblPlants" id="TraesSYM7D03G04548600.1">
    <property type="protein sequence ID" value="TraesSYM7D03G04548600.1.CDS1"/>
    <property type="gene ID" value="TraesSYM7D03G04548600"/>
</dbReference>
<dbReference type="EnsemblPlants" id="TraesWEE_scaffold_033147_01G000100.1">
    <property type="protein sequence ID" value="TraesWEE_scaffold_033147_01G000100.1"/>
    <property type="gene ID" value="TraesWEE_scaffold_033147_01G000100"/>
</dbReference>
<dbReference type="GeneID" id="543292"/>
<dbReference type="Gramene" id="TraesARI7D03G04571400.1">
    <property type="protein sequence ID" value="TraesARI7D03G04571400.1.CDS1"/>
    <property type="gene ID" value="TraesARI7D03G04571400"/>
</dbReference>
<dbReference type="Gramene" id="TraesCAD_scaffold_030350_01G000300.1">
    <property type="protein sequence ID" value="TraesCAD_scaffold_030350_01G000300.1"/>
    <property type="gene ID" value="TraesCAD_scaffold_030350_01G000300"/>
</dbReference>
<dbReference type="Gramene" id="TraesCLE_scaffold_011549_01G000100.1">
    <property type="protein sequence ID" value="TraesCLE_scaffold_011549_01G000100.1"/>
    <property type="gene ID" value="TraesCLE_scaffold_011549_01G000100"/>
</dbReference>
<dbReference type="Gramene" id="TraesCS7D02G551400.1">
    <property type="protein sequence ID" value="TraesCS7D02G551400.1.cds1"/>
    <property type="gene ID" value="TraesCS7D02G551400"/>
</dbReference>
<dbReference type="Gramene" id="TraesCS7D03G1290300.1">
    <property type="protein sequence ID" value="TraesCS7D03G1290300.1.CDS1"/>
    <property type="gene ID" value="TraesCS7D03G1290300"/>
</dbReference>
<dbReference type="Gramene" id="TraesJAG7D03G04478230.1">
    <property type="protein sequence ID" value="TraesJAG7D03G04478230.1.CDS1"/>
    <property type="gene ID" value="TraesJAG7D03G04478230"/>
</dbReference>
<dbReference type="Gramene" id="TraesJUL7D03G04541580.1">
    <property type="protein sequence ID" value="TraesJUL7D03G04541580.1.CDS1"/>
    <property type="gene ID" value="TraesJUL7D03G04541580"/>
</dbReference>
<dbReference type="Gramene" id="TraesKAR7D01G0461220.1">
    <property type="protein sequence ID" value="cds.TraesKAR7D01G0461220.1"/>
    <property type="gene ID" value="TraesKAR7D01G0461220"/>
</dbReference>
<dbReference type="Gramene" id="TraesLAC7D03G04441680.1">
    <property type="protein sequence ID" value="TraesLAC7D03G04441680.1.CDS1"/>
    <property type="gene ID" value="TraesLAC7D03G04441680"/>
</dbReference>
<dbReference type="Gramene" id="TraesLDM7D03G04502620.1">
    <property type="protein sequence ID" value="TraesLDM7D03G04502620.1.CDS1"/>
    <property type="gene ID" value="TraesLDM7D03G04502620"/>
</dbReference>
<dbReference type="Gramene" id="TraesMAC7D03G04488580.1">
    <property type="protein sequence ID" value="TraesMAC7D03G04488580.1.CDS1"/>
    <property type="gene ID" value="TraesMAC7D03G04488580"/>
</dbReference>
<dbReference type="Gramene" id="TraesNOR7D03G04542730.1">
    <property type="protein sequence ID" value="TraesNOR7D03G04542730.1.CDS1"/>
    <property type="gene ID" value="TraesNOR7D03G04542730"/>
</dbReference>
<dbReference type="Gramene" id="TraesNOR7D03G04542730.2">
    <property type="protein sequence ID" value="TraesNOR7D03G04542730.2.CDS1"/>
    <property type="gene ID" value="TraesNOR7D03G04542730"/>
</dbReference>
<dbReference type="Gramene" id="TraesPARA_EIv1.0_2641160.1">
    <property type="protein sequence ID" value="TraesPARA_EIv1.0_2641160.1.CDS1"/>
    <property type="gene ID" value="TraesPARA_EIv1.0_2641160"/>
</dbReference>
<dbReference type="Gramene" id="TraesROB_scaffold_001937_01G001300.1">
    <property type="protein sequence ID" value="TraesROB_scaffold_001937_01G001300.1"/>
    <property type="gene ID" value="TraesROB_scaffold_001937_01G001300"/>
</dbReference>
<dbReference type="Gramene" id="TraesSTA7D03G04488310.1">
    <property type="protein sequence ID" value="TraesSTA7D03G04488310.1.CDS1"/>
    <property type="gene ID" value="TraesSTA7D03G04488310"/>
</dbReference>
<dbReference type="Gramene" id="TraesSYM7D03G04548600.1">
    <property type="protein sequence ID" value="TraesSYM7D03G04548600.1.CDS1"/>
    <property type="gene ID" value="TraesSYM7D03G04548600"/>
</dbReference>
<dbReference type="Gramene" id="TraesWEE_scaffold_033147_01G000100.1">
    <property type="protein sequence ID" value="TraesWEE_scaffold_033147_01G000100.1"/>
    <property type="gene ID" value="TraesWEE_scaffold_033147_01G000100"/>
</dbReference>
<dbReference type="eggNOG" id="ENOG502QPIR">
    <property type="taxonomic scope" value="Eukaryota"/>
</dbReference>
<dbReference type="OMA" id="FTIWPAG"/>
<dbReference type="OrthoDB" id="622371at2759"/>
<dbReference type="Proteomes" id="UP000019116">
    <property type="component" value="Chromosome 7D"/>
</dbReference>
<dbReference type="ExpressionAtlas" id="P27357">
    <property type="expression patterns" value="baseline and differential"/>
</dbReference>
<dbReference type="GO" id="GO:0006952">
    <property type="term" value="P:defense response"/>
    <property type="evidence" value="ECO:0000318"/>
    <property type="project" value="GO_Central"/>
</dbReference>
<dbReference type="CDD" id="cd09217">
    <property type="entry name" value="TLP-P"/>
    <property type="match status" value="1"/>
</dbReference>
<dbReference type="Gene3D" id="2.60.110.10">
    <property type="entry name" value="Thaumatin"/>
    <property type="match status" value="1"/>
</dbReference>
<dbReference type="InterPro" id="IPR037176">
    <property type="entry name" value="Osmotin/thaumatin-like_sf"/>
</dbReference>
<dbReference type="InterPro" id="IPR001938">
    <property type="entry name" value="Thaumatin"/>
</dbReference>
<dbReference type="InterPro" id="IPR017949">
    <property type="entry name" value="Thaumatin_CS"/>
</dbReference>
<dbReference type="PANTHER" id="PTHR31048">
    <property type="entry name" value="OS03G0233200 PROTEIN"/>
    <property type="match status" value="1"/>
</dbReference>
<dbReference type="Pfam" id="PF00314">
    <property type="entry name" value="Thaumatin"/>
    <property type="match status" value="1"/>
</dbReference>
<dbReference type="PIRSF" id="PIRSF002703">
    <property type="entry name" value="Thaumatin"/>
    <property type="match status" value="1"/>
</dbReference>
<dbReference type="PRINTS" id="PR00347">
    <property type="entry name" value="THAUMATIN"/>
</dbReference>
<dbReference type="SMART" id="SM00205">
    <property type="entry name" value="THN"/>
    <property type="match status" value="1"/>
</dbReference>
<dbReference type="SUPFAM" id="SSF49870">
    <property type="entry name" value="Osmotin, thaumatin-like protein"/>
    <property type="match status" value="1"/>
</dbReference>
<dbReference type="PROSITE" id="PS00316">
    <property type="entry name" value="THAUMATIN_1"/>
    <property type="match status" value="1"/>
</dbReference>
<dbReference type="PROSITE" id="PS51367">
    <property type="entry name" value="THAUMATIN_2"/>
    <property type="match status" value="1"/>
</dbReference>
<accession>P27357</accession>
<name>TLP_WHEAT</name>
<organism>
    <name type="scientific">Triticum aestivum</name>
    <name type="common">Wheat</name>
    <dbReference type="NCBI Taxonomy" id="4565"/>
    <lineage>
        <taxon>Eukaryota</taxon>
        <taxon>Viridiplantae</taxon>
        <taxon>Streptophyta</taxon>
        <taxon>Embryophyta</taxon>
        <taxon>Tracheophyta</taxon>
        <taxon>Spermatophyta</taxon>
        <taxon>Magnoliopsida</taxon>
        <taxon>Liliopsida</taxon>
        <taxon>Poales</taxon>
        <taxon>Poaceae</taxon>
        <taxon>BOP clade</taxon>
        <taxon>Pooideae</taxon>
        <taxon>Triticodae</taxon>
        <taxon>Triticeae</taxon>
        <taxon>Triticinae</taxon>
        <taxon>Triticum</taxon>
    </lineage>
</organism>